<proteinExistence type="inferred from homology"/>
<feature type="chain" id="PRO_0000356373" description="Large ribosomal subunit protein bL33">
    <location>
        <begin position="1"/>
        <end position="52"/>
    </location>
</feature>
<gene>
    <name evidence="1" type="primary">rpmG</name>
    <name type="ordered locus">Adeh_1585</name>
</gene>
<accession>Q2II77</accession>
<reference key="1">
    <citation type="submission" date="2006-01" db="EMBL/GenBank/DDBJ databases">
        <title>Complete sequence of Anaeromyxobacter dehalogenans 2CP-C.</title>
        <authorList>
            <person name="Copeland A."/>
            <person name="Lucas S."/>
            <person name="Lapidus A."/>
            <person name="Barry K."/>
            <person name="Detter J.C."/>
            <person name="Glavina T."/>
            <person name="Hammon N."/>
            <person name="Israni S."/>
            <person name="Pitluck S."/>
            <person name="Brettin T."/>
            <person name="Bruce D."/>
            <person name="Han C."/>
            <person name="Tapia R."/>
            <person name="Gilna P."/>
            <person name="Kiss H."/>
            <person name="Schmutz J."/>
            <person name="Larimer F."/>
            <person name="Land M."/>
            <person name="Kyrpides N."/>
            <person name="Anderson I."/>
            <person name="Sanford R.A."/>
            <person name="Ritalahti K.M."/>
            <person name="Thomas H.S."/>
            <person name="Kirby J.R."/>
            <person name="Zhulin I.B."/>
            <person name="Loeffler F.E."/>
            <person name="Richardson P."/>
        </authorList>
    </citation>
    <scope>NUCLEOTIDE SEQUENCE [LARGE SCALE GENOMIC DNA]</scope>
    <source>
        <strain>2CP-C</strain>
    </source>
</reference>
<protein>
    <recommendedName>
        <fullName evidence="1">Large ribosomal subunit protein bL33</fullName>
    </recommendedName>
    <alternativeName>
        <fullName evidence="2">50S ribosomal protein L33</fullName>
    </alternativeName>
</protein>
<name>RL33_ANADE</name>
<evidence type="ECO:0000255" key="1">
    <source>
        <dbReference type="HAMAP-Rule" id="MF_00294"/>
    </source>
</evidence>
<evidence type="ECO:0000305" key="2"/>
<dbReference type="EMBL" id="CP000251">
    <property type="protein sequence ID" value="ABC81358.1"/>
    <property type="molecule type" value="Genomic_DNA"/>
</dbReference>
<dbReference type="RefSeq" id="WP_011420641.1">
    <property type="nucleotide sequence ID" value="NC_007760.1"/>
</dbReference>
<dbReference type="SMR" id="Q2II77"/>
<dbReference type="STRING" id="290397.Adeh_1585"/>
<dbReference type="KEGG" id="ade:Adeh_1585"/>
<dbReference type="eggNOG" id="COG0267">
    <property type="taxonomic scope" value="Bacteria"/>
</dbReference>
<dbReference type="HOGENOM" id="CLU_190949_0_2_7"/>
<dbReference type="Proteomes" id="UP000001935">
    <property type="component" value="Chromosome"/>
</dbReference>
<dbReference type="GO" id="GO:0005737">
    <property type="term" value="C:cytoplasm"/>
    <property type="evidence" value="ECO:0007669"/>
    <property type="project" value="UniProtKB-ARBA"/>
</dbReference>
<dbReference type="GO" id="GO:1990904">
    <property type="term" value="C:ribonucleoprotein complex"/>
    <property type="evidence" value="ECO:0007669"/>
    <property type="project" value="UniProtKB-KW"/>
</dbReference>
<dbReference type="GO" id="GO:0005840">
    <property type="term" value="C:ribosome"/>
    <property type="evidence" value="ECO:0007669"/>
    <property type="project" value="UniProtKB-KW"/>
</dbReference>
<dbReference type="GO" id="GO:0003735">
    <property type="term" value="F:structural constituent of ribosome"/>
    <property type="evidence" value="ECO:0007669"/>
    <property type="project" value="InterPro"/>
</dbReference>
<dbReference type="GO" id="GO:0006412">
    <property type="term" value="P:translation"/>
    <property type="evidence" value="ECO:0007669"/>
    <property type="project" value="UniProtKB-UniRule"/>
</dbReference>
<dbReference type="Gene3D" id="2.20.28.120">
    <property type="entry name" value="Ribosomal protein L33"/>
    <property type="match status" value="1"/>
</dbReference>
<dbReference type="HAMAP" id="MF_00294">
    <property type="entry name" value="Ribosomal_bL33"/>
    <property type="match status" value="1"/>
</dbReference>
<dbReference type="InterPro" id="IPR001705">
    <property type="entry name" value="Ribosomal_bL33"/>
</dbReference>
<dbReference type="InterPro" id="IPR018264">
    <property type="entry name" value="Ribosomal_bL33_CS"/>
</dbReference>
<dbReference type="InterPro" id="IPR038584">
    <property type="entry name" value="Ribosomal_bL33_sf"/>
</dbReference>
<dbReference type="InterPro" id="IPR011332">
    <property type="entry name" value="Ribosomal_zn-bd"/>
</dbReference>
<dbReference type="NCBIfam" id="NF001764">
    <property type="entry name" value="PRK00504.1"/>
    <property type="match status" value="1"/>
</dbReference>
<dbReference type="NCBIfam" id="NF001860">
    <property type="entry name" value="PRK00595.1"/>
    <property type="match status" value="1"/>
</dbReference>
<dbReference type="NCBIfam" id="TIGR01023">
    <property type="entry name" value="rpmG_bact"/>
    <property type="match status" value="1"/>
</dbReference>
<dbReference type="PANTHER" id="PTHR43168">
    <property type="entry name" value="50S RIBOSOMAL PROTEIN L33, CHLOROPLASTIC"/>
    <property type="match status" value="1"/>
</dbReference>
<dbReference type="PANTHER" id="PTHR43168:SF2">
    <property type="entry name" value="LARGE RIBOSOMAL SUBUNIT PROTEIN BL33C"/>
    <property type="match status" value="1"/>
</dbReference>
<dbReference type="Pfam" id="PF00471">
    <property type="entry name" value="Ribosomal_L33"/>
    <property type="match status" value="1"/>
</dbReference>
<dbReference type="SUPFAM" id="SSF57829">
    <property type="entry name" value="Zn-binding ribosomal proteins"/>
    <property type="match status" value="1"/>
</dbReference>
<dbReference type="PROSITE" id="PS00582">
    <property type="entry name" value="RIBOSOMAL_L33"/>
    <property type="match status" value="1"/>
</dbReference>
<organism>
    <name type="scientific">Anaeromyxobacter dehalogenans (strain 2CP-C)</name>
    <dbReference type="NCBI Taxonomy" id="290397"/>
    <lineage>
        <taxon>Bacteria</taxon>
        <taxon>Pseudomonadati</taxon>
        <taxon>Myxococcota</taxon>
        <taxon>Myxococcia</taxon>
        <taxon>Myxococcales</taxon>
        <taxon>Cystobacterineae</taxon>
        <taxon>Anaeromyxobacteraceae</taxon>
        <taxon>Anaeromyxobacter</taxon>
    </lineage>
</organism>
<comment type="similarity">
    <text evidence="1">Belongs to the bacterial ribosomal protein bL33 family.</text>
</comment>
<keyword id="KW-1185">Reference proteome</keyword>
<keyword id="KW-0687">Ribonucleoprotein</keyword>
<keyword id="KW-0689">Ribosomal protein</keyword>
<sequence length="52" mass="6172">MAGNRSIITLECKTCKERNYTTTKNKKKTQDKLTLSKYCPRCRKHVEHKETK</sequence>